<reference key="1">
    <citation type="submission" date="2007-03" db="EMBL/GenBank/DDBJ databases">
        <title>Sequencing analysis of Aethionema coridifolium chloroplast DNA.</title>
        <authorList>
            <person name="Hosouchi T."/>
            <person name="Tsuruoka H."/>
            <person name="Kotani H."/>
        </authorList>
    </citation>
    <scope>NUCLEOTIDE SEQUENCE [LARGE SCALE GENOMIC DNA]</scope>
</reference>
<sequence length="490" mass="52796">MRINPTTSDPGVSILENKNLGRIAQIIGPVLDVAFPPGKMPNIYNALVVKGRDTLGQEINVTCEVQQLLGNNRVRAVAMSATEGLKRGMDVVDMGTPLSVPVGGATLGRIFNVLGEPVDNLGPVDTRTTSPIHKSAPAFIQLDTKLSIFETGIKVVDLLAPYRRGGKIGLFGGAGVGKTVLIMELINNIAKAHGGVSVFGGVGERTREGNDLYMEMKESGVINEQNLAESKVALVYGQMNEPPGARMRVGLTALTMAEYFRDVNEQDVLLFIDNIFRFVQAGSEVSALLGRMPSAVGYQPTLSTEMGSLQERITSTKKGSITSIQAVYVPADDLTDPAPATTFAHLDATTVLSRGLAAKGIYPAVDPLDSTSTMLQPRIVGEEHYETAQQVKQTLQRYKELQDIIAILGLDELSEEDRLTVARARKIERFLSQPFFVAEVFTGSPGKYVGLAETIRGFKLILSGELDSLPEQAFYLVGNIDEATAKATNL</sequence>
<accession>A4QJC2</accession>
<evidence type="ECO:0000250" key="1">
    <source>
        <dbReference type="UniProtKB" id="P19366"/>
    </source>
</evidence>
<evidence type="ECO:0000255" key="2">
    <source>
        <dbReference type="HAMAP-Rule" id="MF_01347"/>
    </source>
</evidence>
<gene>
    <name evidence="2" type="primary">atpB</name>
</gene>
<name>ATPB_AETCO</name>
<dbReference type="EC" id="7.1.2.2" evidence="2"/>
<dbReference type="EMBL" id="AP009366">
    <property type="protein sequence ID" value="BAF49777.1"/>
    <property type="molecule type" value="Genomic_DNA"/>
</dbReference>
<dbReference type="RefSeq" id="YP_001122953.1">
    <property type="nucleotide sequence ID" value="NC_009265.1"/>
</dbReference>
<dbReference type="SMR" id="A4QJC2"/>
<dbReference type="GeneID" id="4968666"/>
<dbReference type="GO" id="GO:0009535">
    <property type="term" value="C:chloroplast thylakoid membrane"/>
    <property type="evidence" value="ECO:0007669"/>
    <property type="project" value="UniProtKB-SubCell"/>
</dbReference>
<dbReference type="GO" id="GO:0005739">
    <property type="term" value="C:mitochondrion"/>
    <property type="evidence" value="ECO:0007669"/>
    <property type="project" value="GOC"/>
</dbReference>
<dbReference type="GO" id="GO:0045259">
    <property type="term" value="C:proton-transporting ATP synthase complex"/>
    <property type="evidence" value="ECO:0007669"/>
    <property type="project" value="UniProtKB-KW"/>
</dbReference>
<dbReference type="GO" id="GO:0005524">
    <property type="term" value="F:ATP binding"/>
    <property type="evidence" value="ECO:0007669"/>
    <property type="project" value="UniProtKB-UniRule"/>
</dbReference>
<dbReference type="GO" id="GO:0016887">
    <property type="term" value="F:ATP hydrolysis activity"/>
    <property type="evidence" value="ECO:0007669"/>
    <property type="project" value="InterPro"/>
</dbReference>
<dbReference type="GO" id="GO:0046933">
    <property type="term" value="F:proton-transporting ATP synthase activity, rotational mechanism"/>
    <property type="evidence" value="ECO:0007669"/>
    <property type="project" value="UniProtKB-UniRule"/>
</dbReference>
<dbReference type="GO" id="GO:0042776">
    <property type="term" value="P:proton motive force-driven mitochondrial ATP synthesis"/>
    <property type="evidence" value="ECO:0007669"/>
    <property type="project" value="TreeGrafter"/>
</dbReference>
<dbReference type="CDD" id="cd18110">
    <property type="entry name" value="ATP-synt_F1_beta_C"/>
    <property type="match status" value="1"/>
</dbReference>
<dbReference type="CDD" id="cd18115">
    <property type="entry name" value="ATP-synt_F1_beta_N"/>
    <property type="match status" value="1"/>
</dbReference>
<dbReference type="CDD" id="cd01133">
    <property type="entry name" value="F1-ATPase_beta_CD"/>
    <property type="match status" value="1"/>
</dbReference>
<dbReference type="FunFam" id="1.10.1140.10:FF:000001">
    <property type="entry name" value="ATP synthase subunit beta"/>
    <property type="match status" value="1"/>
</dbReference>
<dbReference type="FunFam" id="3.40.50.12240:FF:000006">
    <property type="entry name" value="ATP synthase subunit beta"/>
    <property type="match status" value="1"/>
</dbReference>
<dbReference type="FunFam" id="3.40.50.300:FF:000026">
    <property type="entry name" value="ATP synthase subunit beta"/>
    <property type="match status" value="1"/>
</dbReference>
<dbReference type="FunFam" id="2.40.10.170:FF:000002">
    <property type="entry name" value="ATP synthase subunit beta, chloroplastic"/>
    <property type="match status" value="1"/>
</dbReference>
<dbReference type="Gene3D" id="2.40.10.170">
    <property type="match status" value="1"/>
</dbReference>
<dbReference type="Gene3D" id="1.10.1140.10">
    <property type="entry name" value="Bovine Mitochondrial F1-atpase, Atp Synthase Beta Chain, Chain D, domain 3"/>
    <property type="match status" value="1"/>
</dbReference>
<dbReference type="Gene3D" id="3.40.50.300">
    <property type="entry name" value="P-loop containing nucleotide triphosphate hydrolases"/>
    <property type="match status" value="1"/>
</dbReference>
<dbReference type="HAMAP" id="MF_01347">
    <property type="entry name" value="ATP_synth_beta_bact"/>
    <property type="match status" value="1"/>
</dbReference>
<dbReference type="InterPro" id="IPR003593">
    <property type="entry name" value="AAA+_ATPase"/>
</dbReference>
<dbReference type="InterPro" id="IPR055190">
    <property type="entry name" value="ATP-synt_VA_C"/>
</dbReference>
<dbReference type="InterPro" id="IPR005722">
    <property type="entry name" value="ATP_synth_F1_bsu"/>
</dbReference>
<dbReference type="InterPro" id="IPR020003">
    <property type="entry name" value="ATPase_a/bsu_AS"/>
</dbReference>
<dbReference type="InterPro" id="IPR050053">
    <property type="entry name" value="ATPase_alpha/beta_chains"/>
</dbReference>
<dbReference type="InterPro" id="IPR004100">
    <property type="entry name" value="ATPase_F1/V1/A1_a/bsu_N"/>
</dbReference>
<dbReference type="InterPro" id="IPR036121">
    <property type="entry name" value="ATPase_F1/V1/A1_a/bsu_N_sf"/>
</dbReference>
<dbReference type="InterPro" id="IPR000194">
    <property type="entry name" value="ATPase_F1/V1/A1_a/bsu_nucl-bd"/>
</dbReference>
<dbReference type="InterPro" id="IPR024034">
    <property type="entry name" value="ATPase_F1/V1_b/a_C"/>
</dbReference>
<dbReference type="InterPro" id="IPR027417">
    <property type="entry name" value="P-loop_NTPase"/>
</dbReference>
<dbReference type="NCBIfam" id="TIGR01039">
    <property type="entry name" value="atpD"/>
    <property type="match status" value="1"/>
</dbReference>
<dbReference type="PANTHER" id="PTHR15184">
    <property type="entry name" value="ATP SYNTHASE"/>
    <property type="match status" value="1"/>
</dbReference>
<dbReference type="PANTHER" id="PTHR15184:SF71">
    <property type="entry name" value="ATP SYNTHASE SUBUNIT BETA, MITOCHONDRIAL"/>
    <property type="match status" value="1"/>
</dbReference>
<dbReference type="Pfam" id="PF00006">
    <property type="entry name" value="ATP-synt_ab"/>
    <property type="match status" value="1"/>
</dbReference>
<dbReference type="Pfam" id="PF02874">
    <property type="entry name" value="ATP-synt_ab_N"/>
    <property type="match status" value="1"/>
</dbReference>
<dbReference type="Pfam" id="PF22919">
    <property type="entry name" value="ATP-synt_VA_C"/>
    <property type="match status" value="1"/>
</dbReference>
<dbReference type="SMART" id="SM00382">
    <property type="entry name" value="AAA"/>
    <property type="match status" value="1"/>
</dbReference>
<dbReference type="SUPFAM" id="SSF47917">
    <property type="entry name" value="C-terminal domain of alpha and beta subunits of F1 ATP synthase"/>
    <property type="match status" value="1"/>
</dbReference>
<dbReference type="SUPFAM" id="SSF50615">
    <property type="entry name" value="N-terminal domain of alpha and beta subunits of F1 ATP synthase"/>
    <property type="match status" value="1"/>
</dbReference>
<dbReference type="SUPFAM" id="SSF52540">
    <property type="entry name" value="P-loop containing nucleoside triphosphate hydrolases"/>
    <property type="match status" value="1"/>
</dbReference>
<dbReference type="PROSITE" id="PS00152">
    <property type="entry name" value="ATPASE_ALPHA_BETA"/>
    <property type="match status" value="1"/>
</dbReference>
<comment type="function">
    <text evidence="2">Produces ATP from ADP in the presence of a proton gradient across the membrane. The catalytic sites are hosted primarily by the beta subunits.</text>
</comment>
<comment type="catalytic activity">
    <reaction evidence="2">
        <text>ATP + H2O + 4 H(+)(in) = ADP + phosphate + 5 H(+)(out)</text>
        <dbReference type="Rhea" id="RHEA:57720"/>
        <dbReference type="ChEBI" id="CHEBI:15377"/>
        <dbReference type="ChEBI" id="CHEBI:15378"/>
        <dbReference type="ChEBI" id="CHEBI:30616"/>
        <dbReference type="ChEBI" id="CHEBI:43474"/>
        <dbReference type="ChEBI" id="CHEBI:456216"/>
        <dbReference type="EC" id="7.1.2.2"/>
    </reaction>
</comment>
<comment type="subunit">
    <text evidence="2">F-type ATPases have 2 components, CF(1) - the catalytic core - and CF(0) - the membrane proton channel. CF(1) has five subunits: alpha(3), beta(3), gamma(1), delta(1), epsilon(1). CF(0) has four main subunits: a(1), b(1), b'(1) and c(9-12).</text>
</comment>
<comment type="subcellular location">
    <subcellularLocation>
        <location evidence="2">Plastid</location>
        <location evidence="2">Chloroplast thylakoid membrane</location>
        <topology evidence="2">Peripheral membrane protein</topology>
    </subcellularLocation>
</comment>
<comment type="similarity">
    <text evidence="2">Belongs to the ATPase alpha/beta chains family.</text>
</comment>
<keyword id="KW-0066">ATP synthesis</keyword>
<keyword id="KW-0067">ATP-binding</keyword>
<keyword id="KW-0139">CF(1)</keyword>
<keyword id="KW-0150">Chloroplast</keyword>
<keyword id="KW-0375">Hydrogen ion transport</keyword>
<keyword id="KW-0406">Ion transport</keyword>
<keyword id="KW-0472">Membrane</keyword>
<keyword id="KW-0547">Nucleotide-binding</keyword>
<keyword id="KW-0597">Phosphoprotein</keyword>
<keyword id="KW-0934">Plastid</keyword>
<keyword id="KW-0793">Thylakoid</keyword>
<keyword id="KW-1278">Translocase</keyword>
<keyword id="KW-0813">Transport</keyword>
<feature type="chain" id="PRO_0000339602" description="ATP synthase subunit beta, chloroplastic">
    <location>
        <begin position="1"/>
        <end position="490"/>
    </location>
</feature>
<feature type="binding site" evidence="2">
    <location>
        <begin position="172"/>
        <end position="179"/>
    </location>
    <ligand>
        <name>ATP</name>
        <dbReference type="ChEBI" id="CHEBI:30616"/>
    </ligand>
</feature>
<feature type="modified residue" description="Phosphothreonine" evidence="1">
    <location>
        <position position="6"/>
    </location>
</feature>
<feature type="modified residue" description="Phosphoserine" evidence="1">
    <location>
        <position position="13"/>
    </location>
</feature>
<organism>
    <name type="scientific">Aethionema cordifolium</name>
    <name type="common">Lebanon stonecress</name>
    <dbReference type="NCBI Taxonomy" id="434059"/>
    <lineage>
        <taxon>Eukaryota</taxon>
        <taxon>Viridiplantae</taxon>
        <taxon>Streptophyta</taxon>
        <taxon>Embryophyta</taxon>
        <taxon>Tracheophyta</taxon>
        <taxon>Spermatophyta</taxon>
        <taxon>Magnoliopsida</taxon>
        <taxon>eudicotyledons</taxon>
        <taxon>Gunneridae</taxon>
        <taxon>Pentapetalae</taxon>
        <taxon>rosids</taxon>
        <taxon>malvids</taxon>
        <taxon>Brassicales</taxon>
        <taxon>Brassicaceae</taxon>
        <taxon>Aethionemeae</taxon>
        <taxon>Aethionema</taxon>
    </lineage>
</organism>
<protein>
    <recommendedName>
        <fullName evidence="2">ATP synthase subunit beta, chloroplastic</fullName>
        <ecNumber evidence="2">7.1.2.2</ecNumber>
    </recommendedName>
    <alternativeName>
        <fullName evidence="2">ATP synthase F1 sector subunit beta</fullName>
    </alternativeName>
    <alternativeName>
        <fullName evidence="2">F-ATPase subunit beta</fullName>
    </alternativeName>
</protein>
<geneLocation type="chloroplast"/>
<proteinExistence type="inferred from homology"/>